<reference key="1">
    <citation type="journal article" date="2003" name="Nucleic Acids Res.">
        <title>Genome sequence of Chlamydophila caviae (Chlamydia psittaci GPIC): examining the role of niche-specific genes in the evolution of the Chlamydiaceae.</title>
        <authorList>
            <person name="Read T.D."/>
            <person name="Myers G.S.A."/>
            <person name="Brunham R.C."/>
            <person name="Nelson W.C."/>
            <person name="Paulsen I.T."/>
            <person name="Heidelberg J.F."/>
            <person name="Holtzapple E.K."/>
            <person name="Khouri H.M."/>
            <person name="Federova N.B."/>
            <person name="Carty H.A."/>
            <person name="Umayam L.A."/>
            <person name="Haft D.H."/>
            <person name="Peterson J.D."/>
            <person name="Beanan M.J."/>
            <person name="White O."/>
            <person name="Salzberg S.L."/>
            <person name="Hsia R.-C."/>
            <person name="McClarty G."/>
            <person name="Rank R.G."/>
            <person name="Bavoil P.M."/>
            <person name="Fraser C.M."/>
        </authorList>
    </citation>
    <scope>NUCLEOTIDE SEQUENCE [LARGE SCALE GENOMIC DNA]</scope>
    <source>
        <strain>ATCC VR-813 / DSM 19441 / 03DC25 / GPIC</strain>
    </source>
</reference>
<sequence length="606" mass="67126">MVISPSKKQAARRHTHSVKIGNLYVGSEHSIKMQSMTTTPTADVEATVTQICALVEAKCEIARVTVQGIKEAQACEHIKERLLSMGIAIPLVADIHFFPQAAMHVADFVDKVRINPGNFVDKRNMFTGKTYTDKNYADSLLRLEEKFTPLVEKCKRLGKAMRIGVNHGSLSERVMQRYGDTIEGMVVSALEYIEVCEKLGYRDVVFSMKSSNPKVMVAAYRQLAKDLDARGWHYPLHLGVTEAGIGLDGIIKSAVGIGTLLTEGLGDTIRCSLTGCPTTEIPVCESLLKHTTTYLDLPKKENPFALENSETFVNASKKITKATPWGSVYGVFIKLMKEHLLNNTVEKLLEQLGINPTNGKKDFTAPDGIIVPKSFIGTSVIEKLKEHLLVFHHHEVPCLYNHNEEIWNSEQVLSAPFVHCHATPPFIHSTREFFEKKQSNEQPVKLVFSKDLDDEFEAAVSIATEFGALLLDGLGEAVILDLPNVSLPTVREIAFSTLQSAGVRLVKTEYISCPGCGRTLFDLPEVTTRIREKTKHLVGLKIAVMGCIVNGPGEMADSDFGFVGSKTGMIDLYVKHTCVKAHIPMEDAEEELVRLLQEHGVWKDPE</sequence>
<protein>
    <recommendedName>
        <fullName evidence="1">4-hydroxy-3-methylbut-2-en-1-yl diphosphate synthase (flavodoxin)</fullName>
        <ecNumber evidence="1">1.17.7.3</ecNumber>
    </recommendedName>
    <alternativeName>
        <fullName evidence="1">1-hydroxy-2-methyl-2-(E)-butenyl 4-diphosphate synthase</fullName>
    </alternativeName>
</protein>
<keyword id="KW-0004">4Fe-4S</keyword>
<keyword id="KW-0408">Iron</keyword>
<keyword id="KW-0411">Iron-sulfur</keyword>
<keyword id="KW-0414">Isoprene biosynthesis</keyword>
<keyword id="KW-0479">Metal-binding</keyword>
<keyword id="KW-0560">Oxidoreductase</keyword>
<dbReference type="EC" id="1.17.7.3" evidence="1"/>
<dbReference type="EMBL" id="AE015925">
    <property type="protein sequence ID" value="AAP05169.1"/>
    <property type="molecule type" value="Genomic_DNA"/>
</dbReference>
<dbReference type="RefSeq" id="WP_011006385.1">
    <property type="nucleotide sequence ID" value="NC_003361.3"/>
</dbReference>
<dbReference type="SMR" id="Q823I7"/>
<dbReference type="STRING" id="227941.CCA_00423"/>
<dbReference type="KEGG" id="cca:CCA_00423"/>
<dbReference type="eggNOG" id="COG0821">
    <property type="taxonomic scope" value="Bacteria"/>
</dbReference>
<dbReference type="HOGENOM" id="CLU_012689_0_0_0"/>
<dbReference type="OrthoDB" id="9803214at2"/>
<dbReference type="UniPathway" id="UPA00056">
    <property type="reaction ID" value="UER00096"/>
</dbReference>
<dbReference type="Proteomes" id="UP000002193">
    <property type="component" value="Chromosome"/>
</dbReference>
<dbReference type="GO" id="GO:0051539">
    <property type="term" value="F:4 iron, 4 sulfur cluster binding"/>
    <property type="evidence" value="ECO:0007669"/>
    <property type="project" value="UniProtKB-UniRule"/>
</dbReference>
<dbReference type="GO" id="GO:0046429">
    <property type="term" value="F:4-hydroxy-3-methylbut-2-en-1-yl diphosphate synthase activity (ferredoxin)"/>
    <property type="evidence" value="ECO:0007669"/>
    <property type="project" value="UniProtKB-UniRule"/>
</dbReference>
<dbReference type="GO" id="GO:0141197">
    <property type="term" value="F:4-hydroxy-3-methylbut-2-enyl-diphosphate synthase activity (flavodoxin)"/>
    <property type="evidence" value="ECO:0007669"/>
    <property type="project" value="UniProtKB-EC"/>
</dbReference>
<dbReference type="GO" id="GO:0005506">
    <property type="term" value="F:iron ion binding"/>
    <property type="evidence" value="ECO:0007669"/>
    <property type="project" value="InterPro"/>
</dbReference>
<dbReference type="GO" id="GO:0019288">
    <property type="term" value="P:isopentenyl diphosphate biosynthetic process, methylerythritol 4-phosphate pathway"/>
    <property type="evidence" value="ECO:0007669"/>
    <property type="project" value="UniProtKB-UniRule"/>
</dbReference>
<dbReference type="GO" id="GO:0016114">
    <property type="term" value="P:terpenoid biosynthetic process"/>
    <property type="evidence" value="ECO:0007669"/>
    <property type="project" value="InterPro"/>
</dbReference>
<dbReference type="FunFam" id="3.20.20.20:FF:000005">
    <property type="entry name" value="4-hydroxy-3-methylbut-2-en-1-yl diphosphate synthase (flavodoxin)"/>
    <property type="match status" value="1"/>
</dbReference>
<dbReference type="FunFam" id="3.30.413.10:FF:000006">
    <property type="entry name" value="4-hydroxy-3-methylbut-2-en-1-yl diphosphate synthase (flavodoxin)"/>
    <property type="match status" value="1"/>
</dbReference>
<dbReference type="Gene3D" id="3.20.20.20">
    <property type="entry name" value="Dihydropteroate synthase-like"/>
    <property type="match status" value="1"/>
</dbReference>
<dbReference type="Gene3D" id="3.30.413.10">
    <property type="entry name" value="Sulfite Reductase Hemoprotein, domain 1"/>
    <property type="match status" value="1"/>
</dbReference>
<dbReference type="HAMAP" id="MF_00159">
    <property type="entry name" value="IspG"/>
    <property type="match status" value="1"/>
</dbReference>
<dbReference type="InterPro" id="IPR011005">
    <property type="entry name" value="Dihydropteroate_synth-like_sf"/>
</dbReference>
<dbReference type="InterPro" id="IPR017178">
    <property type="entry name" value="IspG_atypical"/>
</dbReference>
<dbReference type="InterPro" id="IPR004588">
    <property type="entry name" value="IspG_bac-typ"/>
</dbReference>
<dbReference type="InterPro" id="IPR045854">
    <property type="entry name" value="NO2/SO3_Rdtase_4Fe4S_sf"/>
</dbReference>
<dbReference type="NCBIfam" id="TIGR00612">
    <property type="entry name" value="ispG_gcpE"/>
    <property type="match status" value="1"/>
</dbReference>
<dbReference type="NCBIfam" id="NF001912">
    <property type="entry name" value="PRK00694.1"/>
    <property type="match status" value="1"/>
</dbReference>
<dbReference type="PANTHER" id="PTHR30454">
    <property type="entry name" value="4-HYDROXY-3-METHYLBUT-2-EN-1-YL DIPHOSPHATE SYNTHASE"/>
    <property type="match status" value="1"/>
</dbReference>
<dbReference type="PANTHER" id="PTHR30454:SF0">
    <property type="entry name" value="4-HYDROXY-3-METHYLBUT-2-EN-1-YL DIPHOSPHATE SYNTHASE (FERREDOXIN), CHLOROPLASTIC"/>
    <property type="match status" value="1"/>
</dbReference>
<dbReference type="Pfam" id="PF04551">
    <property type="entry name" value="GcpE"/>
    <property type="match status" value="2"/>
</dbReference>
<dbReference type="PIRSF" id="PIRSF037336">
    <property type="entry name" value="IspG_like"/>
    <property type="match status" value="1"/>
</dbReference>
<dbReference type="SUPFAM" id="SSF56014">
    <property type="entry name" value="Nitrite and sulphite reductase 4Fe-4S domain-like"/>
    <property type="match status" value="1"/>
</dbReference>
<accession>Q823I7</accession>
<proteinExistence type="inferred from homology"/>
<name>ISPG_CHLCV</name>
<feature type="chain" id="PRO_0000190557" description="4-hydroxy-3-methylbut-2-en-1-yl diphosphate synthase (flavodoxin)">
    <location>
        <begin position="1"/>
        <end position="606"/>
    </location>
</feature>
<feature type="binding site" evidence="1">
    <location>
        <position position="513"/>
    </location>
    <ligand>
        <name>[4Fe-4S] cluster</name>
        <dbReference type="ChEBI" id="CHEBI:49883"/>
    </ligand>
</feature>
<feature type="binding site" evidence="1">
    <location>
        <position position="516"/>
    </location>
    <ligand>
        <name>[4Fe-4S] cluster</name>
        <dbReference type="ChEBI" id="CHEBI:49883"/>
    </ligand>
</feature>
<feature type="binding site" evidence="1">
    <location>
        <position position="547"/>
    </location>
    <ligand>
        <name>[4Fe-4S] cluster</name>
        <dbReference type="ChEBI" id="CHEBI:49883"/>
    </ligand>
</feature>
<feature type="binding site" evidence="1">
    <location>
        <position position="554"/>
    </location>
    <ligand>
        <name>[4Fe-4S] cluster</name>
        <dbReference type="ChEBI" id="CHEBI:49883"/>
    </ligand>
</feature>
<gene>
    <name evidence="1" type="primary">ispG</name>
    <name type="synonym">gcpE</name>
    <name type="ordered locus">CCA_00423</name>
</gene>
<evidence type="ECO:0000255" key="1">
    <source>
        <dbReference type="HAMAP-Rule" id="MF_00159"/>
    </source>
</evidence>
<organism>
    <name type="scientific">Chlamydia caviae (strain ATCC VR-813 / DSM 19441 / 03DC25 / GPIC)</name>
    <name type="common">Chlamydophila caviae</name>
    <dbReference type="NCBI Taxonomy" id="227941"/>
    <lineage>
        <taxon>Bacteria</taxon>
        <taxon>Pseudomonadati</taxon>
        <taxon>Chlamydiota</taxon>
        <taxon>Chlamydiia</taxon>
        <taxon>Chlamydiales</taxon>
        <taxon>Chlamydiaceae</taxon>
        <taxon>Chlamydia/Chlamydophila group</taxon>
        <taxon>Chlamydia</taxon>
    </lineage>
</organism>
<comment type="function">
    <text evidence="1">Converts 2C-methyl-D-erythritol 2,4-cyclodiphosphate (ME-2,4cPP) into 1-hydroxy-2-methyl-2-(E)-butenyl 4-diphosphate.</text>
</comment>
<comment type="catalytic activity">
    <reaction evidence="1">
        <text>(2E)-4-hydroxy-3-methylbut-2-enyl diphosphate + oxidized [flavodoxin] + H2O + 2 H(+) = 2-C-methyl-D-erythritol 2,4-cyclic diphosphate + reduced [flavodoxin]</text>
        <dbReference type="Rhea" id="RHEA:43604"/>
        <dbReference type="Rhea" id="RHEA-COMP:10622"/>
        <dbReference type="Rhea" id="RHEA-COMP:10623"/>
        <dbReference type="ChEBI" id="CHEBI:15377"/>
        <dbReference type="ChEBI" id="CHEBI:15378"/>
        <dbReference type="ChEBI" id="CHEBI:57618"/>
        <dbReference type="ChEBI" id="CHEBI:58210"/>
        <dbReference type="ChEBI" id="CHEBI:58483"/>
        <dbReference type="ChEBI" id="CHEBI:128753"/>
        <dbReference type="EC" id="1.17.7.3"/>
    </reaction>
</comment>
<comment type="cofactor">
    <cofactor evidence="1">
        <name>[4Fe-4S] cluster</name>
        <dbReference type="ChEBI" id="CHEBI:49883"/>
    </cofactor>
    <text evidence="1">Binds 1 [4Fe-4S] cluster.</text>
</comment>
<comment type="pathway">
    <text evidence="1">Isoprenoid biosynthesis; isopentenyl diphosphate biosynthesis via DXP pathway; isopentenyl diphosphate from 1-deoxy-D-xylulose 5-phosphate: step 5/6.</text>
</comment>
<comment type="similarity">
    <text evidence="1">Belongs to the IspG family.</text>
</comment>